<organism>
    <name type="scientific">Methanococcus maripaludis (strain C7 / ATCC BAA-1331)</name>
    <dbReference type="NCBI Taxonomy" id="426368"/>
    <lineage>
        <taxon>Archaea</taxon>
        <taxon>Methanobacteriati</taxon>
        <taxon>Methanobacteriota</taxon>
        <taxon>Methanomada group</taxon>
        <taxon>Methanococci</taxon>
        <taxon>Methanococcales</taxon>
        <taxon>Methanococcaceae</taxon>
        <taxon>Methanococcus</taxon>
    </lineage>
</organism>
<comment type="function">
    <text evidence="1">S-adenosyl-L-methionine-dependent methyltransferase that catalyzes the trimethylation of the amino group of the modified target histidine residue in translation elongation factor 2 (EF-2), to form an intermediate called diphthine. The three successive methylation reactions represent the second step of diphthamide biosynthesis.</text>
</comment>
<comment type="catalytic activity">
    <reaction evidence="1">
        <text>2-[(3S)-amino-3-carboxypropyl]-L-histidyl-[translation elongation factor 2] + 3 S-adenosyl-L-methionine = diphthine-[translation elongation factor 2] + 3 S-adenosyl-L-homocysteine + 3 H(+)</text>
        <dbReference type="Rhea" id="RHEA:36415"/>
        <dbReference type="Rhea" id="RHEA-COMP:9749"/>
        <dbReference type="Rhea" id="RHEA-COMP:10172"/>
        <dbReference type="ChEBI" id="CHEBI:15378"/>
        <dbReference type="ChEBI" id="CHEBI:57856"/>
        <dbReference type="ChEBI" id="CHEBI:59789"/>
        <dbReference type="ChEBI" id="CHEBI:73995"/>
        <dbReference type="ChEBI" id="CHEBI:82696"/>
        <dbReference type="EC" id="2.1.1.98"/>
    </reaction>
</comment>
<comment type="pathway">
    <text evidence="1">Protein modification; peptidyl-diphthamide biosynthesis.</text>
</comment>
<comment type="subunit">
    <text evidence="1">Homodimer.</text>
</comment>
<comment type="similarity">
    <text evidence="1">Belongs to the diphthine synthase family.</text>
</comment>
<feature type="chain" id="PRO_1000064822" description="Diphthine synthase">
    <location>
        <begin position="1"/>
        <end position="255"/>
    </location>
</feature>
<feature type="binding site" evidence="1">
    <location>
        <position position="9"/>
    </location>
    <ligand>
        <name>S-adenosyl-L-methionine</name>
        <dbReference type="ChEBI" id="CHEBI:59789"/>
    </ligand>
</feature>
<feature type="binding site" evidence="1">
    <location>
        <position position="85"/>
    </location>
    <ligand>
        <name>S-adenosyl-L-methionine</name>
        <dbReference type="ChEBI" id="CHEBI:59789"/>
    </ligand>
</feature>
<feature type="binding site" evidence="1">
    <location>
        <position position="88"/>
    </location>
    <ligand>
        <name>S-adenosyl-L-methionine</name>
        <dbReference type="ChEBI" id="CHEBI:59789"/>
    </ligand>
</feature>
<feature type="binding site" evidence="1">
    <location>
        <begin position="113"/>
        <end position="114"/>
    </location>
    <ligand>
        <name>S-adenosyl-L-methionine</name>
        <dbReference type="ChEBI" id="CHEBI:59789"/>
    </ligand>
</feature>
<feature type="binding site" evidence="1">
    <location>
        <position position="164"/>
    </location>
    <ligand>
        <name>S-adenosyl-L-methionine</name>
        <dbReference type="ChEBI" id="CHEBI:59789"/>
    </ligand>
</feature>
<feature type="binding site" evidence="1">
    <location>
        <position position="207"/>
    </location>
    <ligand>
        <name>S-adenosyl-L-methionine</name>
        <dbReference type="ChEBI" id="CHEBI:59789"/>
    </ligand>
</feature>
<feature type="binding site" evidence="1">
    <location>
        <position position="232"/>
    </location>
    <ligand>
        <name>S-adenosyl-L-methionine</name>
        <dbReference type="ChEBI" id="CHEBI:59789"/>
    </ligand>
</feature>
<sequence>MLVMAGLGLYDERDVTLKTLDFAKKVDKIYAEFYTAILTGTSMEKIENTLQKPITVLDREKVEYETNKLIEEAVDKDIMFLTAGDPMVATTHVDIAVEARKKGIEVVIINAPSIYSAIGITGLQLYKFGKTTSVVFPEPNYFPETPYDVIKDNLKLGYHTLCLLDIQADKERFMTANEGLDALLKIEEKRNENVISGETYAAVVARAGSIKPGLYYGKIKDLINYDFGTPLHCVIIPGKLHFMEEDALKYLFENI</sequence>
<proteinExistence type="inferred from homology"/>
<reference key="1">
    <citation type="submission" date="2007-06" db="EMBL/GenBank/DDBJ databases">
        <title>Complete sequence of Methanococcus maripaludis C7.</title>
        <authorList>
            <consortium name="US DOE Joint Genome Institute"/>
            <person name="Copeland A."/>
            <person name="Lucas S."/>
            <person name="Lapidus A."/>
            <person name="Barry K."/>
            <person name="Glavina del Rio T."/>
            <person name="Dalin E."/>
            <person name="Tice H."/>
            <person name="Pitluck S."/>
            <person name="Clum A."/>
            <person name="Schmutz J."/>
            <person name="Larimer F."/>
            <person name="Land M."/>
            <person name="Hauser L."/>
            <person name="Kyrpides N."/>
            <person name="Anderson I."/>
            <person name="Sieprawska-Lupa M."/>
            <person name="Whitman W.B."/>
            <person name="Richardson P."/>
        </authorList>
    </citation>
    <scope>NUCLEOTIDE SEQUENCE [LARGE SCALE GENOMIC DNA]</scope>
    <source>
        <strain>C7 / ATCC BAA-1331</strain>
    </source>
</reference>
<evidence type="ECO:0000255" key="1">
    <source>
        <dbReference type="HAMAP-Rule" id="MF_01084"/>
    </source>
</evidence>
<dbReference type="EC" id="2.1.1.98" evidence="1"/>
<dbReference type="EMBL" id="CP000745">
    <property type="protein sequence ID" value="ABR66667.1"/>
    <property type="molecule type" value="Genomic_DNA"/>
</dbReference>
<dbReference type="SMR" id="A6VJP1"/>
<dbReference type="STRING" id="426368.MmarC7_1609"/>
<dbReference type="KEGG" id="mmz:MmarC7_1609"/>
<dbReference type="eggNOG" id="arCOG04161">
    <property type="taxonomic scope" value="Archaea"/>
</dbReference>
<dbReference type="HOGENOM" id="CLU_066040_1_0_2"/>
<dbReference type="OrthoDB" id="39139at2157"/>
<dbReference type="UniPathway" id="UPA00559"/>
<dbReference type="GO" id="GO:0004164">
    <property type="term" value="F:diphthine synthase activity"/>
    <property type="evidence" value="ECO:0007669"/>
    <property type="project" value="UniProtKB-UniRule"/>
</dbReference>
<dbReference type="GO" id="GO:0032259">
    <property type="term" value="P:methylation"/>
    <property type="evidence" value="ECO:0007669"/>
    <property type="project" value="UniProtKB-KW"/>
</dbReference>
<dbReference type="GO" id="GO:0017183">
    <property type="term" value="P:protein histidyl modification to diphthamide"/>
    <property type="evidence" value="ECO:0007669"/>
    <property type="project" value="UniProtKB-UniRule"/>
</dbReference>
<dbReference type="CDD" id="cd11647">
    <property type="entry name" value="DHP5_DphB"/>
    <property type="match status" value="1"/>
</dbReference>
<dbReference type="Gene3D" id="3.40.1010.10">
    <property type="entry name" value="Cobalt-precorrin-4 Transmethylase, Domain 1"/>
    <property type="match status" value="1"/>
</dbReference>
<dbReference type="Gene3D" id="3.30.950.10">
    <property type="entry name" value="Methyltransferase, Cobalt-precorrin-4 Transmethylase, Domain 2"/>
    <property type="match status" value="1"/>
</dbReference>
<dbReference type="HAMAP" id="MF_01084">
    <property type="entry name" value="Diphthine_synth"/>
    <property type="match status" value="1"/>
</dbReference>
<dbReference type="InterPro" id="IPR000878">
    <property type="entry name" value="4pyrrol_Mease"/>
</dbReference>
<dbReference type="InterPro" id="IPR035996">
    <property type="entry name" value="4pyrrol_Methylase_sf"/>
</dbReference>
<dbReference type="InterPro" id="IPR014777">
    <property type="entry name" value="4pyrrole_Mease_sub1"/>
</dbReference>
<dbReference type="InterPro" id="IPR014776">
    <property type="entry name" value="4pyrrole_Mease_sub2"/>
</dbReference>
<dbReference type="InterPro" id="IPR004551">
    <property type="entry name" value="Dphthn_synthase"/>
</dbReference>
<dbReference type="NCBIfam" id="TIGR00522">
    <property type="entry name" value="dph5"/>
    <property type="match status" value="1"/>
</dbReference>
<dbReference type="PANTHER" id="PTHR10882:SF0">
    <property type="entry name" value="DIPHTHINE METHYL ESTER SYNTHASE"/>
    <property type="match status" value="1"/>
</dbReference>
<dbReference type="PANTHER" id="PTHR10882">
    <property type="entry name" value="DIPHTHINE SYNTHASE"/>
    <property type="match status" value="1"/>
</dbReference>
<dbReference type="Pfam" id="PF00590">
    <property type="entry name" value="TP_methylase"/>
    <property type="match status" value="1"/>
</dbReference>
<dbReference type="PIRSF" id="PIRSF036432">
    <property type="entry name" value="Diphthine_synth"/>
    <property type="match status" value="1"/>
</dbReference>
<dbReference type="SUPFAM" id="SSF53790">
    <property type="entry name" value="Tetrapyrrole methylase"/>
    <property type="match status" value="1"/>
</dbReference>
<accession>A6VJP1</accession>
<name>DPHB_METM7</name>
<keyword id="KW-0489">Methyltransferase</keyword>
<keyword id="KW-0949">S-adenosyl-L-methionine</keyword>
<keyword id="KW-0808">Transferase</keyword>
<gene>
    <name evidence="1" type="primary">dphB</name>
    <name type="ordered locus">MmarC7_1609</name>
</gene>
<protein>
    <recommendedName>
        <fullName evidence="1">Diphthine synthase</fullName>
        <ecNumber evidence="1">2.1.1.98</ecNumber>
    </recommendedName>
    <alternativeName>
        <fullName evidence="1">Diphthamide biosynthesis methyltransferase</fullName>
    </alternativeName>
</protein>